<protein>
    <recommendedName>
        <fullName>Immunoglobulin superfamily member 1</fullName>
        <shortName>IgSF1</shortName>
    </recommendedName>
    <alternativeName>
        <fullName>Inhibin-binding protein</fullName>
        <shortName>InhBP</shortName>
    </alternativeName>
</protein>
<organism>
    <name type="scientific">Rattus norvegicus</name>
    <name type="common">Rat</name>
    <dbReference type="NCBI Taxonomy" id="10116"/>
    <lineage>
        <taxon>Eukaryota</taxon>
        <taxon>Metazoa</taxon>
        <taxon>Chordata</taxon>
        <taxon>Craniata</taxon>
        <taxon>Vertebrata</taxon>
        <taxon>Euteleostomi</taxon>
        <taxon>Mammalia</taxon>
        <taxon>Eutheria</taxon>
        <taxon>Euarchontoglires</taxon>
        <taxon>Glires</taxon>
        <taxon>Rodentia</taxon>
        <taxon>Myomorpha</taxon>
        <taxon>Muroidea</taxon>
        <taxon>Muridae</taxon>
        <taxon>Murinae</taxon>
        <taxon>Rattus</taxon>
    </lineage>
</organism>
<feature type="signal peptide" evidence="2">
    <location>
        <begin position="1"/>
        <end position="18"/>
    </location>
</feature>
<feature type="chain" id="PRO_0000318514" description="Immunoglobulin superfamily member 1">
    <location>
        <begin position="19"/>
        <end position="1320"/>
    </location>
</feature>
<feature type="topological domain" description="Extracellular" evidence="2">
    <location>
        <begin position="19"/>
        <end position="504"/>
    </location>
</feature>
<feature type="transmembrane region" description="Helical" evidence="2">
    <location>
        <begin position="505"/>
        <end position="525"/>
    </location>
</feature>
<feature type="topological domain" description="Cytoplasmic" evidence="2">
    <location>
        <begin position="526"/>
        <end position="534"/>
    </location>
</feature>
<feature type="transmembrane region" description="Helical" evidence="2">
    <location>
        <begin position="535"/>
        <end position="555"/>
    </location>
</feature>
<feature type="topological domain" description="Extracellular" evidence="2">
    <location>
        <begin position="556"/>
        <end position="1320"/>
    </location>
</feature>
<feature type="domain" description="Ig-like C2-type 1">
    <location>
        <begin position="29"/>
        <end position="113"/>
    </location>
</feature>
<feature type="domain" description="Ig-like C2-type 2">
    <location>
        <begin position="115"/>
        <end position="212"/>
    </location>
</feature>
<feature type="domain" description="Ig-like C2-type 3">
    <location>
        <begin position="224"/>
        <end position="308"/>
    </location>
</feature>
<feature type="domain" description="Ig-like C2-type 4">
    <location>
        <begin position="312"/>
        <end position="399"/>
    </location>
</feature>
<feature type="domain" description="Ig-like C2-type 5">
    <location>
        <begin position="401"/>
        <end position="482"/>
    </location>
</feature>
<feature type="domain" description="Ig-like C2-type 6">
    <location>
        <begin position="572"/>
        <end position="665"/>
    </location>
</feature>
<feature type="domain" description="Ig-like C2-type 7">
    <location>
        <begin position="662"/>
        <end position="756"/>
    </location>
</feature>
<feature type="domain" description="Ig-like C2-type 8">
    <location>
        <begin position="761"/>
        <end position="853"/>
    </location>
</feature>
<feature type="domain" description="Ig-like C2-type 9">
    <location>
        <begin position="857"/>
        <end position="942"/>
    </location>
</feature>
<feature type="domain" description="Ig-like C2-type 10">
    <location>
        <begin position="949"/>
        <end position="1044"/>
    </location>
</feature>
<feature type="domain" description="Ig-like C2-type 11">
    <location>
        <begin position="1049"/>
        <end position="1134"/>
    </location>
</feature>
<feature type="domain" description="Ig-like C2-type 12">
    <location>
        <begin position="1145"/>
        <end position="1226"/>
    </location>
</feature>
<feature type="glycosylation site" description="N-linked (GlcNAc...) asparagine" evidence="2">
    <location>
        <position position="44"/>
    </location>
</feature>
<feature type="glycosylation site" description="N-linked (GlcNAc...) asparagine" evidence="2">
    <location>
        <position position="329"/>
    </location>
</feature>
<feature type="glycosylation site" description="N-linked (GlcNAc...) asparagine" evidence="2">
    <location>
        <position position="365"/>
    </location>
</feature>
<feature type="glycosylation site" description="N-linked (GlcNAc...) asparagine" evidence="2">
    <location>
        <position position="372"/>
    </location>
</feature>
<feature type="glycosylation site" description="N-linked (GlcNAc...) asparagine" evidence="2">
    <location>
        <position position="591"/>
    </location>
</feature>
<feature type="glycosylation site" description="N-linked (GlcNAc...) asparagine" evidence="2">
    <location>
        <position position="731"/>
    </location>
</feature>
<feature type="glycosylation site" description="N-linked (GlcNAc...) asparagine" evidence="9">
    <location>
        <position position="782"/>
    </location>
</feature>
<feature type="glycosylation site" description="N-linked (GlcNAc...) asparagine" evidence="2">
    <location>
        <position position="830"/>
    </location>
</feature>
<feature type="glycosylation site" description="N-linked (GlcNAc...) asparagine" evidence="2">
    <location>
        <position position="874"/>
    </location>
</feature>
<feature type="glycosylation site" description="N-linked (GlcNAc...) asparagine" evidence="2">
    <location>
        <position position="923"/>
    </location>
</feature>
<feature type="glycosylation site" description="N-linked (GlcNAc...) asparagine" evidence="2">
    <location>
        <position position="970"/>
    </location>
</feature>
<feature type="glycosylation site" description="N-linked (GlcNAc...) asparagine" evidence="2">
    <location>
        <position position="1011"/>
    </location>
</feature>
<feature type="glycosylation site" description="N-linked (GlcNAc...) asparagine" evidence="2">
    <location>
        <position position="1066"/>
    </location>
</feature>
<feature type="glycosylation site" description="N-linked (GlcNAc...) asparagine" evidence="2">
    <location>
        <position position="1131"/>
    </location>
</feature>
<feature type="glycosylation site" description="N-linked (GlcNAc...) asparagine" evidence="2">
    <location>
        <position position="1207"/>
    </location>
</feature>
<feature type="disulfide bond" evidence="3">
    <location>
        <begin position="49"/>
        <end position="97"/>
    </location>
</feature>
<feature type="disulfide bond" evidence="3">
    <location>
        <begin position="334"/>
        <end position="383"/>
    </location>
</feature>
<feature type="disulfide bond" evidence="3">
    <location>
        <begin position="423"/>
        <end position="466"/>
    </location>
</feature>
<feature type="disulfide bond" evidence="3">
    <location>
        <begin position="783"/>
        <end position="833"/>
    </location>
</feature>
<feature type="disulfide bond" evidence="3">
    <location>
        <begin position="879"/>
        <end position="926"/>
    </location>
</feature>
<feature type="disulfide bond" evidence="3">
    <location>
        <begin position="1071"/>
        <end position="1118"/>
    </location>
</feature>
<feature type="disulfide bond" evidence="3">
    <location>
        <begin position="1167"/>
        <end position="1210"/>
    </location>
</feature>
<feature type="splice variant" id="VSP_031204" description="In isoform 3." evidence="7">
    <location>
        <position position="24"/>
    </location>
</feature>
<feature type="splice variant" id="VSP_031205" description="In isoform 2 and isoform 3." evidence="6 7">
    <original>LYPKPTLTAHPGPILAPGE</original>
    <variation>GCAHGCWHLTIVIPGIMAG</variation>
    <location>
        <begin position="215"/>
        <end position="233"/>
    </location>
</feature>
<feature type="splice variant" id="VSP_031206" description="In isoform 2 and isoform 3." evidence="6 7">
    <location>
        <begin position="234"/>
        <end position="1320"/>
    </location>
</feature>
<reference key="1">
    <citation type="journal article" date="2001" name="Mol. Endocrinol.">
        <title>Inhibin binding protein in rats: alternative transcripts and regulation in the pituitary across the estrous cycle.</title>
        <authorList>
            <person name="Bernard D.J."/>
            <person name="Woodruff T.K."/>
        </authorList>
    </citation>
    <scope>NUCLEOTIDE SEQUENCE [MRNA] (ISOFORMS 1 AND 2)</scope>
    <scope>TISSUE SPECIFICITY</scope>
</reference>
<reference key="2">
    <citation type="journal article" date="2004" name="Genome Res.">
        <title>The status, quality, and expansion of the NIH full-length cDNA project: the Mammalian Gene Collection (MGC).</title>
        <authorList>
            <consortium name="The MGC Project Team"/>
        </authorList>
    </citation>
    <scope>NUCLEOTIDE SEQUENCE [LARGE SCALE MRNA] (ISOFORMS 2 AND 3)</scope>
    <source>
        <tissue>Pituitary</tissue>
    </source>
</reference>
<reference key="3">
    <citation type="journal article" date="2000" name="Endocrinology">
        <title>Structure and expression of a membrane component of the inhibin receptor system.</title>
        <authorList>
            <person name="Chong H."/>
            <person name="Pangas S.A."/>
            <person name="Bernard D.J."/>
            <person name="Wang E."/>
            <person name="Gitch J."/>
            <person name="Chen W."/>
            <person name="Draper L.B."/>
            <person name="Cox E.T."/>
            <person name="Woodruff T.K."/>
        </authorList>
    </citation>
    <scope>TISSUE SPECIFICITY</scope>
</reference>
<reference key="4">
    <citation type="journal article" date="2013" name="J. Proteome Res.">
        <title>Site-specific glycan-peptide analysis for determination of N-glycoproteome heterogeneity.</title>
        <authorList>
            <person name="Parker B.L."/>
            <person name="Thaysen-Andersen M."/>
            <person name="Solis N."/>
            <person name="Scott N.E."/>
            <person name="Larsen M.R."/>
            <person name="Graham M.E."/>
            <person name="Packer N.H."/>
            <person name="Cordwell S.J."/>
        </authorList>
    </citation>
    <scope>GLYCOSYLATION [LARGE SCALE ANALYSIS] AT ASN-782</scope>
    <scope>IDENTIFICATION BY MASS SPECTROMETRY [LARGE SCALE ANALYSIS]</scope>
    <source>
        <tissue>Brain</tissue>
    </source>
</reference>
<accession>Q925N6</accession>
<accession>A0JPK8</accession>
<accession>Q925N5</accession>
<proteinExistence type="evidence at protein level"/>
<evidence type="ECO:0000250" key="1"/>
<evidence type="ECO:0000255" key="2"/>
<evidence type="ECO:0000255" key="3">
    <source>
        <dbReference type="PROSITE-ProRule" id="PRU00114"/>
    </source>
</evidence>
<evidence type="ECO:0000269" key="4">
    <source>
    </source>
</evidence>
<evidence type="ECO:0000269" key="5">
    <source>
    </source>
</evidence>
<evidence type="ECO:0000303" key="6">
    <source>
    </source>
</evidence>
<evidence type="ECO:0000303" key="7">
    <source>
    </source>
</evidence>
<evidence type="ECO:0000305" key="8"/>
<evidence type="ECO:0007744" key="9">
    <source>
    </source>
</evidence>
<keyword id="KW-0025">Alternative splicing</keyword>
<keyword id="KW-1015">Disulfide bond</keyword>
<keyword id="KW-0325">Glycoprotein</keyword>
<keyword id="KW-0393">Immunoglobulin domain</keyword>
<keyword id="KW-0472">Membrane</keyword>
<keyword id="KW-0675">Receptor</keyword>
<keyword id="KW-1185">Reference proteome</keyword>
<keyword id="KW-0677">Repeat</keyword>
<keyword id="KW-0964">Secreted</keyword>
<keyword id="KW-0732">Signal</keyword>
<keyword id="KW-0812">Transmembrane</keyword>
<keyword id="KW-1133">Transmembrane helix</keyword>
<dbReference type="EMBL" id="AF322216">
    <property type="protein sequence ID" value="AAK40083.1"/>
    <property type="molecule type" value="mRNA"/>
</dbReference>
<dbReference type="EMBL" id="AF322217">
    <property type="protein sequence ID" value="AAK40084.1"/>
    <property type="molecule type" value="mRNA"/>
</dbReference>
<dbReference type="EMBL" id="BC060309">
    <property type="protein sequence ID" value="AAH60309.1"/>
    <property type="molecule type" value="mRNA"/>
</dbReference>
<dbReference type="EMBL" id="BC127478">
    <property type="protein sequence ID" value="AAI27479.1"/>
    <property type="molecule type" value="mRNA"/>
</dbReference>
<dbReference type="RefSeq" id="NP_786939.1">
    <molecule id="Q925N6-1"/>
    <property type="nucleotide sequence ID" value="NM_175763.2"/>
</dbReference>
<dbReference type="RefSeq" id="XP_038955606.1">
    <molecule id="Q925N6-3"/>
    <property type="nucleotide sequence ID" value="XM_039099678.1"/>
</dbReference>
<dbReference type="RefSeq" id="XP_063136030.1">
    <molecule id="Q925N6-1"/>
    <property type="nucleotide sequence ID" value="XM_063279960.1"/>
</dbReference>
<dbReference type="SMR" id="Q925N6"/>
<dbReference type="FunCoup" id="Q925N6">
    <property type="interactions" value="173"/>
</dbReference>
<dbReference type="STRING" id="10116.ENSRNOP00000010325"/>
<dbReference type="GlyCosmos" id="Q925N6">
    <property type="glycosylation" value="15 sites, 2 glycans"/>
</dbReference>
<dbReference type="GlyGen" id="Q925N6">
    <property type="glycosylation" value="16 sites, 2 N-linked glycans (1 site)"/>
</dbReference>
<dbReference type="iPTMnet" id="Q925N6"/>
<dbReference type="PhosphoSitePlus" id="Q925N6"/>
<dbReference type="PaxDb" id="10116-ENSRNOP00000010325"/>
<dbReference type="GeneID" id="302822"/>
<dbReference type="KEGG" id="rno:302822"/>
<dbReference type="UCSC" id="RGD:631402">
    <molecule id="Q925N6-1"/>
    <property type="organism name" value="rat"/>
</dbReference>
<dbReference type="AGR" id="RGD:631402"/>
<dbReference type="CTD" id="3547"/>
<dbReference type="RGD" id="631402">
    <property type="gene designation" value="Igsf1"/>
</dbReference>
<dbReference type="VEuPathDB" id="HostDB:ENSRNOG00000007600"/>
<dbReference type="eggNOG" id="ENOG502RYEX">
    <property type="taxonomic scope" value="Eukaryota"/>
</dbReference>
<dbReference type="HOGENOM" id="CLU_006143_0_0_1"/>
<dbReference type="InParanoid" id="Q925N6"/>
<dbReference type="OrthoDB" id="9824921at2759"/>
<dbReference type="PhylomeDB" id="Q925N6"/>
<dbReference type="TreeFam" id="TF336644"/>
<dbReference type="PRO" id="PR:Q925N6"/>
<dbReference type="Proteomes" id="UP000002494">
    <property type="component" value="Chromosome X"/>
</dbReference>
<dbReference type="Bgee" id="ENSRNOG00000007600">
    <property type="expression patterns" value="Expressed in testis and 10 other cell types or tissues"/>
</dbReference>
<dbReference type="GO" id="GO:0005576">
    <property type="term" value="C:extracellular region"/>
    <property type="evidence" value="ECO:0007669"/>
    <property type="project" value="UniProtKB-SubCell"/>
</dbReference>
<dbReference type="GO" id="GO:0016020">
    <property type="term" value="C:membrane"/>
    <property type="evidence" value="ECO:0000266"/>
    <property type="project" value="RGD"/>
</dbReference>
<dbReference type="GO" id="GO:0038102">
    <property type="term" value="F:activin receptor antagonist activity"/>
    <property type="evidence" value="ECO:0000266"/>
    <property type="project" value="RGD"/>
</dbReference>
<dbReference type="GO" id="GO:0015026">
    <property type="term" value="F:coreceptor activity"/>
    <property type="evidence" value="ECO:0000314"/>
    <property type="project" value="RGD"/>
</dbReference>
<dbReference type="GO" id="GO:0034711">
    <property type="term" value="F:inhibin binding"/>
    <property type="evidence" value="ECO:0000266"/>
    <property type="project" value="RGD"/>
</dbReference>
<dbReference type="GO" id="GO:0002764">
    <property type="term" value="P:immune response-regulating signaling pathway"/>
    <property type="evidence" value="ECO:0000318"/>
    <property type="project" value="GO_Central"/>
</dbReference>
<dbReference type="GO" id="GO:0032926">
    <property type="term" value="P:negative regulation of activin receptor signaling pathway"/>
    <property type="evidence" value="ECO:0000266"/>
    <property type="project" value="RGD"/>
</dbReference>
<dbReference type="GO" id="GO:0006355">
    <property type="term" value="P:regulation of DNA-templated transcription"/>
    <property type="evidence" value="ECO:0000266"/>
    <property type="project" value="RGD"/>
</dbReference>
<dbReference type="FunFam" id="2.60.40.10:FF:000033">
    <property type="entry name" value="Killer cell immunoglobulin-like receptor"/>
    <property type="match status" value="12"/>
</dbReference>
<dbReference type="Gene3D" id="2.60.40.10">
    <property type="entry name" value="Immunoglobulins"/>
    <property type="match status" value="12"/>
</dbReference>
<dbReference type="InterPro" id="IPR007110">
    <property type="entry name" value="Ig-like_dom"/>
</dbReference>
<dbReference type="InterPro" id="IPR036179">
    <property type="entry name" value="Ig-like_dom_sf"/>
</dbReference>
<dbReference type="InterPro" id="IPR013783">
    <property type="entry name" value="Ig-like_fold"/>
</dbReference>
<dbReference type="InterPro" id="IPR050412">
    <property type="entry name" value="Ig-like_Receptors_ImmuneReg"/>
</dbReference>
<dbReference type="InterPro" id="IPR003599">
    <property type="entry name" value="Ig_sub"/>
</dbReference>
<dbReference type="InterPro" id="IPR003598">
    <property type="entry name" value="Ig_sub2"/>
</dbReference>
<dbReference type="PANTHER" id="PTHR11738">
    <property type="entry name" value="MHC CLASS I NK CELL RECEPTOR"/>
    <property type="match status" value="1"/>
</dbReference>
<dbReference type="PANTHER" id="PTHR11738:SF186">
    <property type="entry name" value="OSTEOCLAST-ASSOCIATED IMMUNOGLOBULIN-LIKE RECEPTOR"/>
    <property type="match status" value="1"/>
</dbReference>
<dbReference type="Pfam" id="PF13895">
    <property type="entry name" value="Ig_2"/>
    <property type="match status" value="4"/>
</dbReference>
<dbReference type="Pfam" id="PF13927">
    <property type="entry name" value="Ig_3"/>
    <property type="match status" value="1"/>
</dbReference>
<dbReference type="SMART" id="SM00409">
    <property type="entry name" value="IG"/>
    <property type="match status" value="11"/>
</dbReference>
<dbReference type="SMART" id="SM00408">
    <property type="entry name" value="IGc2"/>
    <property type="match status" value="6"/>
</dbReference>
<dbReference type="SUPFAM" id="SSF48726">
    <property type="entry name" value="Immunoglobulin"/>
    <property type="match status" value="12"/>
</dbReference>
<dbReference type="PROSITE" id="PS50835">
    <property type="entry name" value="IG_LIKE"/>
    <property type="match status" value="5"/>
</dbReference>
<sequence>MMLRTFTLLLLCIWLNRGMTSMAAVESQPELWIESNYPQAPWENITLWCKSPSRVSSKFLLLKDNTQMTWIHPPYKTFQVSFFIGALTESNTGLYRCCYWNEKGWSKPSKILELEAPGQLPKPIFWIQAETPPFPGCNVNILCHGWLQDLVFMLFKEGYTEPIDYQVPTGTMAIFSIDNLAPENEGIYICRTHIQMLPTLWSEPSNPLKLVVAGLYPKPTLTAHPGPILAPGESLSLRCQGPIYGMTFALMRLEDLKKPYYYKKPIKNEAYFYFQALKTQDTGHYLCFYYDGSYRGSLLSDILKIWVTDTFPKTWLLVQPSPVIQMGQNVSLRCGGLMDGVGLALHKKGEEKPLQFLDATSNTGNNSFFLKNVTYRDAGIYSCHYYLTWKTSIKMATYNTVELIVVAWPSSVFKVGKTITLQCRVSHPVLEFSLEWEETTTFQKFSVDGDFIITNIEGQGTGTYSCSYRIESHANIWSHRSEPLKLVGPAVTGFLPWNSILNEAIRVSLTVQFLSLLLLVLWLQWKCRRLRLREAWLLGTAQGVAMLVILIALLCCGLCNGALTEEIEIIMPTPKPELWAETNFPQAPWKNVTLWCRSPSGSTKEFVLLKDGTGWIATRPASEQVRAAFPLGALTQSHTGSYHCHSWEEMAVSEPSEALELVGTDILPKPVISASLPIRGQELQIRCKGWLEGLGFALYKMGEQEPVQQLGAVGREAFFTIQRMEDKEEGNYSCRTHTEKQPFKWSEPSAPLELVIKELYPKPFFKTWASPVVTPGSRVTFNCSTSREHMSFILYKDGNEIASSDPVWGNPGTSTAHFLIISVGIGDGGNYSCRYYDFSIWSEPSDPVELIVTEFYPKPTLLAQPGPVVLPGKNVTLRCQGIFQGMRFALLQEGAHAPLQFQSASGTSVDFLLHTVGAEDFGNYSCVYYETTMSNRGSYLSTPLMIWVTDTFPRPWLSAEPSSVVTMGQNVTLWCQGPVHGVGYILHKEGEATSMQLWDSTSNEGAFPIINISGASIGRYSCCYHPDWMSPIKIQPSNTLELIVTGLLPKPSLLVQPGPMVVPGENMTFQCQGELPDSTFVLLKEGTQQPIEQQRPSGYRADFWMPVVRDQDSGVYSCVYYLDSAPLVASNHSNSLEIWVTDKPPKPSLSAWPSTVFKLGKDITLQCRGPLPGVEFVLEHDGEEAPQQFSEDGDFVIGNMEGKGIGNYSCSYRLQAYPDIWSEPSDSLELVGAAGPVAQECTVGNIVRSTLIVVVVVALGIVLAIEWKKWPRLRTRGSETDGRDQTIVLEECNQDGEPGTATNSPSSALQGVSVEQTVPI</sequence>
<gene>
    <name type="primary">Igsf1</name>
</gene>
<comment type="function">
    <text evidence="1">Seems to be a coreceptor in inhibin signaling, but seems not to be a high-affinity inhibin receptor. Antagonizes activin A signaling in the presence or absence of inhibin B. Necessary to mediate a specific antagonistic effect of inhibin B on activin-stimulated transcription (By similarity).</text>
</comment>
<comment type="subunit">
    <text evidence="1">Interacts with INHA; the interaction is not confirmed by standard receptor binding assays. Interacts with ACVR1B; the interaction appears to be ligand-dependent as it is diminished by inhibin B and activin A. Interacts with ACVR2A, ACVR2B, ACVRL1 and BMPR1B (By similarity). Interacts with HECTD1 (By similarity).</text>
</comment>
<comment type="subcellular location">
    <molecule>Isoform 1</molecule>
    <subcellularLocation>
        <location evidence="8">Membrane</location>
        <topology evidence="8">Multi-pass membrane protein</topology>
    </subcellularLocation>
</comment>
<comment type="subcellular location">
    <molecule>Isoform 2</molecule>
    <subcellularLocation>
        <location evidence="8">Secreted</location>
    </subcellularLocation>
</comment>
<comment type="subcellular location">
    <molecule>Isoform 3</molecule>
    <subcellularLocation>
        <location evidence="8">Secreted</location>
    </subcellularLocation>
</comment>
<comment type="alternative products">
    <event type="alternative splicing"/>
    <isoform>
        <id>Q925N6-1</id>
        <name>1</name>
        <name>InhBP-L</name>
        <name>long</name>
        <sequence type="displayed"/>
    </isoform>
    <isoform>
        <id>Q925N6-2</id>
        <name>2</name>
        <name>InhBP-S</name>
        <name>short</name>
        <sequence type="described" ref="VSP_031205 VSP_031206"/>
    </isoform>
    <isoform>
        <id>Q925N6-3</id>
        <name>3</name>
        <sequence type="described" ref="VSP_031204 VSP_031205 VSP_031206"/>
    </isoform>
</comment>
<comment type="tissue specificity">
    <text evidence="4 5">Expressed in pituitary gland, testis and liver. Isoform 2 is expressed pituitary gland and testis.</text>
</comment>
<comment type="caution">
    <text evidence="8">It is uncertain whether Met-1 or Met-2 is the initiator.</text>
</comment>
<name>IGSF1_RAT</name>